<keyword id="KW-0274">FAD</keyword>
<keyword id="KW-0285">Flavoprotein</keyword>
<keyword id="KW-0560">Oxidoreductase</keyword>
<keyword id="KW-1185">Reference proteome</keyword>
<comment type="function">
    <text evidence="1">Catalyzes the oxidative demethylation of N-methyl-L-tryptophan.</text>
</comment>
<comment type="catalytic activity">
    <reaction evidence="1">
        <text>N(alpha)-methyl-L-tryptophan + O2 + H2O = L-tryptophan + formaldehyde + H2O2</text>
        <dbReference type="Rhea" id="RHEA:28006"/>
        <dbReference type="ChEBI" id="CHEBI:15377"/>
        <dbReference type="ChEBI" id="CHEBI:15379"/>
        <dbReference type="ChEBI" id="CHEBI:16240"/>
        <dbReference type="ChEBI" id="CHEBI:16842"/>
        <dbReference type="ChEBI" id="CHEBI:57283"/>
        <dbReference type="ChEBI" id="CHEBI:57912"/>
    </reaction>
</comment>
<comment type="cofactor">
    <cofactor evidence="1">
        <name>FAD</name>
        <dbReference type="ChEBI" id="CHEBI:57692"/>
    </cofactor>
    <text evidence="1">Binds 1 FAD per subunit.</text>
</comment>
<comment type="subunit">
    <text evidence="1">Monomer.</text>
</comment>
<comment type="similarity">
    <text evidence="1">Belongs to the MSOX/MTOX family. MTOX subfamily.</text>
</comment>
<dbReference type="EC" id="1.5.3.-" evidence="1"/>
<dbReference type="EMBL" id="CP000880">
    <property type="protein sequence ID" value="ABX21722.1"/>
    <property type="molecule type" value="Genomic_DNA"/>
</dbReference>
<dbReference type="SMR" id="A9MH03"/>
<dbReference type="STRING" id="41514.SARI_01837"/>
<dbReference type="KEGG" id="ses:SARI_01837"/>
<dbReference type="HOGENOM" id="CLU_007884_2_1_6"/>
<dbReference type="Proteomes" id="UP000002084">
    <property type="component" value="Chromosome"/>
</dbReference>
<dbReference type="GO" id="GO:0005829">
    <property type="term" value="C:cytosol"/>
    <property type="evidence" value="ECO:0007669"/>
    <property type="project" value="TreeGrafter"/>
</dbReference>
<dbReference type="GO" id="GO:0050660">
    <property type="term" value="F:flavin adenine dinucleotide binding"/>
    <property type="evidence" value="ECO:0007669"/>
    <property type="project" value="InterPro"/>
</dbReference>
<dbReference type="GO" id="GO:0050131">
    <property type="term" value="F:N-methyl-L-amino-acid oxidase activity"/>
    <property type="evidence" value="ECO:0007669"/>
    <property type="project" value="InterPro"/>
</dbReference>
<dbReference type="GO" id="GO:0008115">
    <property type="term" value="F:sarcosine oxidase activity"/>
    <property type="evidence" value="ECO:0007669"/>
    <property type="project" value="TreeGrafter"/>
</dbReference>
<dbReference type="Gene3D" id="3.30.9.10">
    <property type="entry name" value="D-Amino Acid Oxidase, subunit A, domain 2"/>
    <property type="match status" value="1"/>
</dbReference>
<dbReference type="Gene3D" id="3.50.50.60">
    <property type="entry name" value="FAD/NAD(P)-binding domain"/>
    <property type="match status" value="1"/>
</dbReference>
<dbReference type="HAMAP" id="MF_00515">
    <property type="entry name" value="MTOX"/>
    <property type="match status" value="1"/>
</dbReference>
<dbReference type="InterPro" id="IPR006076">
    <property type="entry name" value="FAD-dep_OxRdtase"/>
</dbReference>
<dbReference type="InterPro" id="IPR036188">
    <property type="entry name" value="FAD/NAD-bd_sf"/>
</dbReference>
<dbReference type="InterPro" id="IPR023493">
    <property type="entry name" value="Me_Trp_Oxase_MTOX"/>
</dbReference>
<dbReference type="InterPro" id="IPR045170">
    <property type="entry name" value="MTOX"/>
</dbReference>
<dbReference type="NCBIfam" id="NF008425">
    <property type="entry name" value="PRK11259.1"/>
    <property type="match status" value="1"/>
</dbReference>
<dbReference type="PANTHER" id="PTHR10961:SF7">
    <property type="entry name" value="FAD DEPENDENT OXIDOREDUCTASE DOMAIN-CONTAINING PROTEIN"/>
    <property type="match status" value="1"/>
</dbReference>
<dbReference type="PANTHER" id="PTHR10961">
    <property type="entry name" value="PEROXISOMAL SARCOSINE OXIDASE"/>
    <property type="match status" value="1"/>
</dbReference>
<dbReference type="Pfam" id="PF01266">
    <property type="entry name" value="DAO"/>
    <property type="match status" value="1"/>
</dbReference>
<dbReference type="SUPFAM" id="SSF54373">
    <property type="entry name" value="FAD-linked reductases, C-terminal domain"/>
    <property type="match status" value="1"/>
</dbReference>
<dbReference type="SUPFAM" id="SSF51905">
    <property type="entry name" value="FAD/NAD(P)-binding domain"/>
    <property type="match status" value="1"/>
</dbReference>
<sequence length="372" mass="40776">MKYDLIIIGSGSVGAAAGYYATRAGLKVLMTDAHMPPHQQGSHHGDTRLIRHAYGEGEKYVPLVLRAQALWDELSAHNEEPIFVRSGVVNLGPADSAFLANVARSAQQRQLNVERLDATALMTRWPEIRVPDNYIGLFEADSGFLRSELAITTWLRLAREAGCAQLFNCPVTRIHHDDNGVTIETGEGRYHASRALLSAGTWVKALAPELPVQPIRKVFAWFQADGRYSVKNRFPAFTGEMPNGDQYYGFPAENNELKIGKHNGGQLIQSQEERKPFAAVASDGAEAFPFLRNVLPGIGGCLHGAACTYDNSPDEDFIIDTLPGHENTLVITGLSGHGFKFAPVLGEIAADFALEKTPSFDLTPFRLSRFSQ</sequence>
<feature type="chain" id="PRO_1000081637" description="N-methyl-L-tryptophan oxidase">
    <location>
        <begin position="1"/>
        <end position="372"/>
    </location>
</feature>
<feature type="binding site" evidence="1">
    <location>
        <begin position="4"/>
        <end position="34"/>
    </location>
    <ligand>
        <name>FAD</name>
        <dbReference type="ChEBI" id="CHEBI:57692"/>
    </ligand>
</feature>
<feature type="modified residue" description="S-8alpha-FAD cysteine" evidence="1">
    <location>
        <position position="307"/>
    </location>
</feature>
<reference key="1">
    <citation type="submission" date="2007-11" db="EMBL/GenBank/DDBJ databases">
        <authorList>
            <consortium name="The Salmonella enterica serovar Arizonae Genome Sequencing Project"/>
            <person name="McClelland M."/>
            <person name="Sanderson E.K."/>
            <person name="Porwollik S."/>
            <person name="Spieth J."/>
            <person name="Clifton W.S."/>
            <person name="Fulton R."/>
            <person name="Chunyan W."/>
            <person name="Wollam A."/>
            <person name="Shah N."/>
            <person name="Pepin K."/>
            <person name="Bhonagiri V."/>
            <person name="Nash W."/>
            <person name="Johnson M."/>
            <person name="Thiruvilangam P."/>
            <person name="Wilson R."/>
        </authorList>
    </citation>
    <scope>NUCLEOTIDE SEQUENCE [LARGE SCALE GENOMIC DNA]</scope>
    <source>
        <strain>ATCC BAA-731 / CDC346-86 / RSK2980</strain>
    </source>
</reference>
<accession>A9MH03</accession>
<organism>
    <name type="scientific">Salmonella arizonae (strain ATCC BAA-731 / CDC346-86 / RSK2980)</name>
    <dbReference type="NCBI Taxonomy" id="41514"/>
    <lineage>
        <taxon>Bacteria</taxon>
        <taxon>Pseudomonadati</taxon>
        <taxon>Pseudomonadota</taxon>
        <taxon>Gammaproteobacteria</taxon>
        <taxon>Enterobacterales</taxon>
        <taxon>Enterobacteriaceae</taxon>
        <taxon>Salmonella</taxon>
    </lineage>
</organism>
<proteinExistence type="inferred from homology"/>
<name>MTOX_SALAR</name>
<evidence type="ECO:0000255" key="1">
    <source>
        <dbReference type="HAMAP-Rule" id="MF_00515"/>
    </source>
</evidence>
<protein>
    <recommendedName>
        <fullName evidence="1">N-methyl-L-tryptophan oxidase</fullName>
        <shortName evidence="1">MTOX</shortName>
        <ecNumber evidence="1">1.5.3.-</ecNumber>
    </recommendedName>
</protein>
<gene>
    <name evidence="1" type="primary">solA</name>
    <name type="ordered locus">SARI_01837</name>
</gene>